<accession>C1CP96</accession>
<sequence length="68" mass="7987">MKLNEVKEFVKELRGLSQEELAKRENELKKELFELRFQAATGQLEQTARLKEVKKQIARIKTVQSEAK</sequence>
<name>RL29_STRZT</name>
<reference key="1">
    <citation type="journal article" date="2010" name="Genome Biol.">
        <title>Structure and dynamics of the pan-genome of Streptococcus pneumoniae and closely related species.</title>
        <authorList>
            <person name="Donati C."/>
            <person name="Hiller N.L."/>
            <person name="Tettelin H."/>
            <person name="Muzzi A."/>
            <person name="Croucher N.J."/>
            <person name="Angiuoli S.V."/>
            <person name="Oggioni M."/>
            <person name="Dunning Hotopp J.C."/>
            <person name="Hu F.Z."/>
            <person name="Riley D.R."/>
            <person name="Covacci A."/>
            <person name="Mitchell T.J."/>
            <person name="Bentley S.D."/>
            <person name="Kilian M."/>
            <person name="Ehrlich G.D."/>
            <person name="Rappuoli R."/>
            <person name="Moxon E.R."/>
            <person name="Masignani V."/>
        </authorList>
    </citation>
    <scope>NUCLEOTIDE SEQUENCE [LARGE SCALE GENOMIC DNA]</scope>
    <source>
        <strain>Taiwan19F-14</strain>
    </source>
</reference>
<dbReference type="EMBL" id="CP000921">
    <property type="protein sequence ID" value="ACO23542.1"/>
    <property type="molecule type" value="Genomic_DNA"/>
</dbReference>
<dbReference type="RefSeq" id="WP_000772918.1">
    <property type="nucleotide sequence ID" value="NC_012469.1"/>
</dbReference>
<dbReference type="SMR" id="C1CP96"/>
<dbReference type="GeneID" id="93738965"/>
<dbReference type="KEGG" id="snt:SPT_0264"/>
<dbReference type="HOGENOM" id="CLU_158491_5_2_9"/>
<dbReference type="GO" id="GO:0022625">
    <property type="term" value="C:cytosolic large ribosomal subunit"/>
    <property type="evidence" value="ECO:0007669"/>
    <property type="project" value="TreeGrafter"/>
</dbReference>
<dbReference type="GO" id="GO:0003735">
    <property type="term" value="F:structural constituent of ribosome"/>
    <property type="evidence" value="ECO:0007669"/>
    <property type="project" value="InterPro"/>
</dbReference>
<dbReference type="GO" id="GO:0006412">
    <property type="term" value="P:translation"/>
    <property type="evidence" value="ECO:0007669"/>
    <property type="project" value="UniProtKB-UniRule"/>
</dbReference>
<dbReference type="CDD" id="cd00427">
    <property type="entry name" value="Ribosomal_L29_HIP"/>
    <property type="match status" value="1"/>
</dbReference>
<dbReference type="FunFam" id="1.10.287.310:FF:000001">
    <property type="entry name" value="50S ribosomal protein L29"/>
    <property type="match status" value="1"/>
</dbReference>
<dbReference type="Gene3D" id="1.10.287.310">
    <property type="match status" value="1"/>
</dbReference>
<dbReference type="HAMAP" id="MF_00374">
    <property type="entry name" value="Ribosomal_uL29"/>
    <property type="match status" value="1"/>
</dbReference>
<dbReference type="InterPro" id="IPR050063">
    <property type="entry name" value="Ribosomal_protein_uL29"/>
</dbReference>
<dbReference type="InterPro" id="IPR001854">
    <property type="entry name" value="Ribosomal_uL29"/>
</dbReference>
<dbReference type="InterPro" id="IPR018254">
    <property type="entry name" value="Ribosomal_uL29_CS"/>
</dbReference>
<dbReference type="InterPro" id="IPR036049">
    <property type="entry name" value="Ribosomal_uL29_sf"/>
</dbReference>
<dbReference type="NCBIfam" id="TIGR00012">
    <property type="entry name" value="L29"/>
    <property type="match status" value="1"/>
</dbReference>
<dbReference type="PANTHER" id="PTHR10916">
    <property type="entry name" value="60S RIBOSOMAL PROTEIN L35/50S RIBOSOMAL PROTEIN L29"/>
    <property type="match status" value="1"/>
</dbReference>
<dbReference type="PANTHER" id="PTHR10916:SF0">
    <property type="entry name" value="LARGE RIBOSOMAL SUBUNIT PROTEIN UL29C"/>
    <property type="match status" value="1"/>
</dbReference>
<dbReference type="Pfam" id="PF00831">
    <property type="entry name" value="Ribosomal_L29"/>
    <property type="match status" value="1"/>
</dbReference>
<dbReference type="SUPFAM" id="SSF46561">
    <property type="entry name" value="Ribosomal protein L29 (L29p)"/>
    <property type="match status" value="1"/>
</dbReference>
<dbReference type="PROSITE" id="PS00579">
    <property type="entry name" value="RIBOSOMAL_L29"/>
    <property type="match status" value="1"/>
</dbReference>
<keyword id="KW-0687">Ribonucleoprotein</keyword>
<keyword id="KW-0689">Ribosomal protein</keyword>
<comment type="similarity">
    <text evidence="1">Belongs to the universal ribosomal protein uL29 family.</text>
</comment>
<gene>
    <name evidence="1" type="primary">rpmC</name>
    <name type="ordered locus">SPT_0264</name>
</gene>
<proteinExistence type="inferred from homology"/>
<organism>
    <name type="scientific">Streptococcus pneumoniae (strain Taiwan19F-14)</name>
    <dbReference type="NCBI Taxonomy" id="487213"/>
    <lineage>
        <taxon>Bacteria</taxon>
        <taxon>Bacillati</taxon>
        <taxon>Bacillota</taxon>
        <taxon>Bacilli</taxon>
        <taxon>Lactobacillales</taxon>
        <taxon>Streptococcaceae</taxon>
        <taxon>Streptococcus</taxon>
    </lineage>
</organism>
<evidence type="ECO:0000255" key="1">
    <source>
        <dbReference type="HAMAP-Rule" id="MF_00374"/>
    </source>
</evidence>
<evidence type="ECO:0000305" key="2"/>
<protein>
    <recommendedName>
        <fullName evidence="1">Large ribosomal subunit protein uL29</fullName>
    </recommendedName>
    <alternativeName>
        <fullName evidence="2">50S ribosomal protein L29</fullName>
    </alternativeName>
</protein>
<feature type="chain" id="PRO_1000194038" description="Large ribosomal subunit protein uL29">
    <location>
        <begin position="1"/>
        <end position="68"/>
    </location>
</feature>